<feature type="transit peptide" description="Mitochondrion" evidence="2">
    <location>
        <begin position="1"/>
        <end position="24"/>
    </location>
</feature>
<feature type="chain" id="PRO_0000257811" description="Malonyl CoA-acyl carrier protein transacylase, mitochondrial">
    <location>
        <begin position="25"/>
        <end position="360"/>
    </location>
</feature>
<feature type="active site" evidence="1">
    <location>
        <position position="105"/>
    </location>
</feature>
<feature type="active site" evidence="1">
    <location>
        <position position="235"/>
    </location>
</feature>
<accession>Q12283</accession>
<accession>D6W2S6</accession>
<keyword id="KW-0012">Acyltransferase</keyword>
<keyword id="KW-0275">Fatty acid biosynthesis</keyword>
<keyword id="KW-0276">Fatty acid metabolism</keyword>
<keyword id="KW-0444">Lipid biosynthesis</keyword>
<keyword id="KW-0443">Lipid metabolism</keyword>
<keyword id="KW-0496">Mitochondrion</keyword>
<keyword id="KW-1185">Reference proteome</keyword>
<keyword id="KW-0808">Transferase</keyword>
<keyword id="KW-0809">Transit peptide</keyword>
<proteinExistence type="evidence at protein level"/>
<sequence>MKLLTFPGQGTSISISILKAIIRNKSREFQTILSQNGKESNDLLQYIFQNPSSPGSIAVCSNLFYQLYQILSNPSDPQDQAPKNMTKIDSPDKKDNEQCYLLGHSLGELTCLSVNSLFSLKDLFDIANFRNKLMVTSTEKYLVAHNINRSNKFEMWALSSPRATDLPQEVQKLLNSPNLLSSSQNTISVANANSVKQCVVTGLVDDLESLRTELNLRFPRLRITELTNPYNIPFHNSTVLRPVQEPLYDYIWDILKKNGTHTLMELNHPIIANLDGNISYYIHHALDRFVKCSSRTVQFTMCYDTINSGTPVEIDKSICFGPGNVIYNLIRRNCPQVDTIEYTSLATIDAYHKAAEENKD</sequence>
<gene>
    <name type="primary">MCT1</name>
    <name type="ordered locus">YOR221C</name>
    <name type="ORF">YOR50-11</name>
</gene>
<name>FABD_YEAST</name>
<reference key="1">
    <citation type="journal article" date="1996" name="Yeast">
        <title>Sequence and analysis of a 33 kb fragment from the right arm of chromosome XV of the yeast Saccharomyces cerevisiae.</title>
        <authorList>
            <person name="Galisson F."/>
            <person name="Dujon B."/>
        </authorList>
    </citation>
    <scope>NUCLEOTIDE SEQUENCE [GENOMIC DNA]</scope>
    <source>
        <strain>ATCC 96604 / S288c / FY1679</strain>
    </source>
</reference>
<reference key="2">
    <citation type="journal article" date="1997" name="Nature">
        <title>The nucleotide sequence of Saccharomyces cerevisiae chromosome XV.</title>
        <authorList>
            <person name="Dujon B."/>
            <person name="Albermann K."/>
            <person name="Aldea M."/>
            <person name="Alexandraki D."/>
            <person name="Ansorge W."/>
            <person name="Arino J."/>
            <person name="Benes V."/>
            <person name="Bohn C."/>
            <person name="Bolotin-Fukuhara M."/>
            <person name="Bordonne R."/>
            <person name="Boyer J."/>
            <person name="Camasses A."/>
            <person name="Casamayor A."/>
            <person name="Casas C."/>
            <person name="Cheret G."/>
            <person name="Cziepluch C."/>
            <person name="Daignan-Fornier B."/>
            <person name="Dang V.-D."/>
            <person name="de Haan M."/>
            <person name="Delius H."/>
            <person name="Durand P."/>
            <person name="Fairhead C."/>
            <person name="Feldmann H."/>
            <person name="Gaillon L."/>
            <person name="Galisson F."/>
            <person name="Gamo F.-J."/>
            <person name="Gancedo C."/>
            <person name="Goffeau A."/>
            <person name="Goulding S.E."/>
            <person name="Grivell L.A."/>
            <person name="Habbig B."/>
            <person name="Hand N.J."/>
            <person name="Hani J."/>
            <person name="Hattenhorst U."/>
            <person name="Hebling U."/>
            <person name="Hernando Y."/>
            <person name="Herrero E."/>
            <person name="Heumann K."/>
            <person name="Hiesel R."/>
            <person name="Hilger F."/>
            <person name="Hofmann B."/>
            <person name="Hollenberg C.P."/>
            <person name="Hughes B."/>
            <person name="Jauniaux J.-C."/>
            <person name="Kalogeropoulos A."/>
            <person name="Katsoulou C."/>
            <person name="Kordes E."/>
            <person name="Lafuente M.J."/>
            <person name="Landt O."/>
            <person name="Louis E.J."/>
            <person name="Maarse A.C."/>
            <person name="Madania A."/>
            <person name="Mannhaupt G."/>
            <person name="Marck C."/>
            <person name="Martin R.P."/>
            <person name="Mewes H.-W."/>
            <person name="Michaux G."/>
            <person name="Paces V."/>
            <person name="Parle-McDermott A.G."/>
            <person name="Pearson B.M."/>
            <person name="Perrin A."/>
            <person name="Pettersson B."/>
            <person name="Poch O."/>
            <person name="Pohl T.M."/>
            <person name="Poirey R."/>
            <person name="Portetelle D."/>
            <person name="Pujol A."/>
            <person name="Purnelle B."/>
            <person name="Ramezani Rad M."/>
            <person name="Rechmann S."/>
            <person name="Schwager C."/>
            <person name="Schweizer M."/>
            <person name="Sor F."/>
            <person name="Sterky F."/>
            <person name="Tarassov I.A."/>
            <person name="Teodoru C."/>
            <person name="Tettelin H."/>
            <person name="Thierry A."/>
            <person name="Tobiasch E."/>
            <person name="Tzermia M."/>
            <person name="Uhlen M."/>
            <person name="Unseld M."/>
            <person name="Valens M."/>
            <person name="Vandenbol M."/>
            <person name="Vetter I."/>
            <person name="Vlcek C."/>
            <person name="Voet M."/>
            <person name="Volckaert G."/>
            <person name="Voss H."/>
            <person name="Wambutt R."/>
            <person name="Wedler H."/>
            <person name="Wiemann S."/>
            <person name="Winsor B."/>
            <person name="Wolfe K.H."/>
            <person name="Zollner A."/>
            <person name="Zumstein E."/>
            <person name="Kleine K."/>
        </authorList>
    </citation>
    <scope>NUCLEOTIDE SEQUENCE [LARGE SCALE GENOMIC DNA]</scope>
    <source>
        <strain>ATCC 204508 / S288c</strain>
    </source>
</reference>
<reference key="3">
    <citation type="journal article" date="2014" name="G3 (Bethesda)">
        <title>The reference genome sequence of Saccharomyces cerevisiae: Then and now.</title>
        <authorList>
            <person name="Engel S.R."/>
            <person name="Dietrich F.S."/>
            <person name="Fisk D.G."/>
            <person name="Binkley G."/>
            <person name="Balakrishnan R."/>
            <person name="Costanzo M.C."/>
            <person name="Dwight S.S."/>
            <person name="Hitz B.C."/>
            <person name="Karra K."/>
            <person name="Nash R.S."/>
            <person name="Weng S."/>
            <person name="Wong E.D."/>
            <person name="Lloyd P."/>
            <person name="Skrzypek M.S."/>
            <person name="Miyasato S.R."/>
            <person name="Simison M."/>
            <person name="Cherry J.M."/>
        </authorList>
    </citation>
    <scope>GENOME REANNOTATION</scope>
    <source>
        <strain>ATCC 204508 / S288c</strain>
    </source>
</reference>
<reference key="4">
    <citation type="journal article" date="1997" name="Curr. Genet.">
        <title>Two genes of the putative mitochondrial fatty acid synthase in the genome of Saccharomyces cerevisiae.</title>
        <authorList>
            <person name="Schneider R."/>
            <person name="Brors B."/>
            <person name="Buerger F."/>
            <person name="Camrath S."/>
            <person name="Weiss H."/>
        </authorList>
    </citation>
    <scope>FUNCTION</scope>
    <scope>CATALYTIC ACTIVITY</scope>
</reference>
<reference key="5">
    <citation type="journal article" date="2003" name="Nature">
        <title>Global analysis of protein localization in budding yeast.</title>
        <authorList>
            <person name="Huh W.-K."/>
            <person name="Falvo J.V."/>
            <person name="Gerke L.C."/>
            <person name="Carroll A.S."/>
            <person name="Howson R.W."/>
            <person name="Weissman J.S."/>
            <person name="O'Shea E.K."/>
        </authorList>
    </citation>
    <scope>SUBCELLULAR LOCATION [LARGE SCALE ANALYSIS]</scope>
</reference>
<reference key="6">
    <citation type="journal article" date="2003" name="Nature">
        <title>Global analysis of protein expression in yeast.</title>
        <authorList>
            <person name="Ghaemmaghami S."/>
            <person name="Huh W.-K."/>
            <person name="Bower K."/>
            <person name="Howson R.W."/>
            <person name="Belle A."/>
            <person name="Dephoure N."/>
            <person name="O'Shea E.K."/>
            <person name="Weissman J.S."/>
        </authorList>
    </citation>
    <scope>LEVEL OF PROTEIN EXPRESSION [LARGE SCALE ANALYSIS]</scope>
</reference>
<reference key="7">
    <citation type="journal article" date="2006" name="J. Proteome Res.">
        <title>Toward the complete yeast mitochondrial proteome: multidimensional separation techniques for mitochondrial proteomics.</title>
        <authorList>
            <person name="Reinders J."/>
            <person name="Zahedi R.P."/>
            <person name="Pfanner N."/>
            <person name="Meisinger C."/>
            <person name="Sickmann A."/>
        </authorList>
    </citation>
    <scope>SUBCELLULAR LOCATION [LARGE SCALE ANALYSIS]</scope>
    <scope>IDENTIFICATION BY MASS SPECTROMETRY</scope>
</reference>
<protein>
    <recommendedName>
        <fullName>Malonyl CoA-acyl carrier protein transacylase, mitochondrial</fullName>
        <shortName>MCT</shortName>
        <ecNumber evidence="6">2.3.1.39</ecNumber>
    </recommendedName>
    <alternativeName>
        <fullName>Malonyl-CoA:ACP transferase</fullName>
    </alternativeName>
</protein>
<comment type="function">
    <text evidence="6">Involved in biosynthesis of fatty acids in mitochondria.</text>
</comment>
<comment type="catalytic activity">
    <reaction evidence="6">
        <text>holo-[ACP] + malonyl-CoA = malonyl-[ACP] + CoA</text>
        <dbReference type="Rhea" id="RHEA:41792"/>
        <dbReference type="Rhea" id="RHEA-COMP:9623"/>
        <dbReference type="Rhea" id="RHEA-COMP:9685"/>
        <dbReference type="ChEBI" id="CHEBI:57287"/>
        <dbReference type="ChEBI" id="CHEBI:57384"/>
        <dbReference type="ChEBI" id="CHEBI:64479"/>
        <dbReference type="ChEBI" id="CHEBI:78449"/>
        <dbReference type="EC" id="2.3.1.39"/>
    </reaction>
</comment>
<comment type="pathway">
    <text>Lipid metabolism; fatty acid biosynthesis.</text>
</comment>
<comment type="subcellular location">
    <subcellularLocation>
        <location evidence="3 5">Mitochondrion</location>
    </subcellularLocation>
</comment>
<comment type="miscellaneous">
    <text evidence="4">Present with 1360 molecules/cell in log phase SD medium.</text>
</comment>
<comment type="similarity">
    <text evidence="7">Belongs to the FabD family.</text>
</comment>
<comment type="sequence caution" evidence="7">
    <conflict type="erroneous gene model prediction">
        <sequence resource="EMBL-CDS" id="CAA63184"/>
    </conflict>
</comment>
<comment type="sequence caution" evidence="7">
    <conflict type="erroneous gene model prediction">
        <sequence resource="EMBL-CDS" id="CAA99439"/>
    </conflict>
</comment>
<organism>
    <name type="scientific">Saccharomyces cerevisiae (strain ATCC 204508 / S288c)</name>
    <name type="common">Baker's yeast</name>
    <dbReference type="NCBI Taxonomy" id="559292"/>
    <lineage>
        <taxon>Eukaryota</taxon>
        <taxon>Fungi</taxon>
        <taxon>Dikarya</taxon>
        <taxon>Ascomycota</taxon>
        <taxon>Saccharomycotina</taxon>
        <taxon>Saccharomycetes</taxon>
        <taxon>Saccharomycetales</taxon>
        <taxon>Saccharomycetaceae</taxon>
        <taxon>Saccharomyces</taxon>
    </lineage>
</organism>
<evidence type="ECO:0000250" key="1">
    <source>
        <dbReference type="UniProtKB" id="P0AAI9"/>
    </source>
</evidence>
<evidence type="ECO:0000255" key="2"/>
<evidence type="ECO:0000269" key="3">
    <source>
    </source>
</evidence>
<evidence type="ECO:0000269" key="4">
    <source>
    </source>
</evidence>
<evidence type="ECO:0000269" key="5">
    <source>
    </source>
</evidence>
<evidence type="ECO:0000269" key="6">
    <source>
    </source>
</evidence>
<evidence type="ECO:0000305" key="7"/>
<dbReference type="EC" id="2.3.1.39" evidence="6"/>
<dbReference type="EMBL" id="X92441">
    <property type="protein sequence ID" value="CAA63184.1"/>
    <property type="status" value="ALT_SEQ"/>
    <property type="molecule type" value="Genomic_DNA"/>
</dbReference>
<dbReference type="EMBL" id="Z75129">
    <property type="protein sequence ID" value="CAA99439.1"/>
    <property type="status" value="ALT_SEQ"/>
    <property type="molecule type" value="Genomic_DNA"/>
</dbReference>
<dbReference type="EMBL" id="BK006948">
    <property type="protein sequence ID" value="DAA10992.1"/>
    <property type="molecule type" value="Genomic_DNA"/>
</dbReference>
<dbReference type="PIR" id="S60948">
    <property type="entry name" value="S60948"/>
</dbReference>
<dbReference type="RefSeq" id="NP_014864.4">
    <property type="nucleotide sequence ID" value="NM_001183640.3"/>
</dbReference>
<dbReference type="SMR" id="Q12283"/>
<dbReference type="BioGRID" id="34615">
    <property type="interactions" value="305"/>
</dbReference>
<dbReference type="DIP" id="DIP-4125N"/>
<dbReference type="FunCoup" id="Q12283">
    <property type="interactions" value="77"/>
</dbReference>
<dbReference type="IntAct" id="Q12283">
    <property type="interactions" value="6"/>
</dbReference>
<dbReference type="STRING" id="4932.YOR221C"/>
<dbReference type="iPTMnet" id="Q12283"/>
<dbReference type="PaxDb" id="4932-YOR221C"/>
<dbReference type="PeptideAtlas" id="Q12283"/>
<dbReference type="EnsemblFungi" id="YOR221C_mRNA">
    <property type="protein sequence ID" value="YOR221C"/>
    <property type="gene ID" value="YOR221C"/>
</dbReference>
<dbReference type="GeneID" id="854396"/>
<dbReference type="KEGG" id="sce:YOR221C"/>
<dbReference type="AGR" id="SGD:S000005747"/>
<dbReference type="SGD" id="S000005747">
    <property type="gene designation" value="MCT1"/>
</dbReference>
<dbReference type="VEuPathDB" id="FungiDB:YOR221C"/>
<dbReference type="eggNOG" id="KOG2926">
    <property type="taxonomic scope" value="Eukaryota"/>
</dbReference>
<dbReference type="HOGENOM" id="CLU_832050_0_0_1"/>
<dbReference type="InParanoid" id="Q12283"/>
<dbReference type="OMA" id="LRPIQEP"/>
<dbReference type="OrthoDB" id="541883at2759"/>
<dbReference type="BioCyc" id="MetaCyc:YOR221C-MONOMER"/>
<dbReference type="BioCyc" id="YEAST:YOR221C-MONOMER"/>
<dbReference type="Reactome" id="R-SCE-77289">
    <property type="pathway name" value="Mitochondrial Fatty Acid Beta-Oxidation"/>
</dbReference>
<dbReference type="UniPathway" id="UPA00094"/>
<dbReference type="BioGRID-ORCS" id="854396">
    <property type="hits" value="1 hit in 10 CRISPR screens"/>
</dbReference>
<dbReference type="PRO" id="PR:Q12283"/>
<dbReference type="Proteomes" id="UP000002311">
    <property type="component" value="Chromosome XV"/>
</dbReference>
<dbReference type="RNAct" id="Q12283">
    <property type="molecule type" value="protein"/>
</dbReference>
<dbReference type="GO" id="GO:0005739">
    <property type="term" value="C:mitochondrion"/>
    <property type="evidence" value="ECO:0000315"/>
    <property type="project" value="SGD"/>
</dbReference>
<dbReference type="GO" id="GO:0004314">
    <property type="term" value="F:[acyl-carrier-protein] S-malonyltransferase activity"/>
    <property type="evidence" value="ECO:0000315"/>
    <property type="project" value="SGD"/>
</dbReference>
<dbReference type="GO" id="GO:0006633">
    <property type="term" value="P:fatty acid biosynthetic process"/>
    <property type="evidence" value="ECO:0000318"/>
    <property type="project" value="GO_Central"/>
</dbReference>
<dbReference type="GO" id="GO:0006631">
    <property type="term" value="P:fatty acid metabolic process"/>
    <property type="evidence" value="ECO:0000315"/>
    <property type="project" value="SGD"/>
</dbReference>
<dbReference type="Gene3D" id="3.30.70.250">
    <property type="entry name" value="Malonyl-CoA ACP transacylase, ACP-binding"/>
    <property type="match status" value="1"/>
</dbReference>
<dbReference type="Gene3D" id="3.40.366.10">
    <property type="entry name" value="Malonyl-Coenzyme A Acyl Carrier Protein, domain 2"/>
    <property type="match status" value="1"/>
</dbReference>
<dbReference type="InterPro" id="IPR001227">
    <property type="entry name" value="Ac_transferase_dom_sf"/>
</dbReference>
<dbReference type="InterPro" id="IPR016035">
    <property type="entry name" value="Acyl_Trfase/lysoPLipase"/>
</dbReference>
<dbReference type="InterPro" id="IPR050858">
    <property type="entry name" value="Mal-CoA-ACP_Trans/PKS_FabD"/>
</dbReference>
<dbReference type="PANTHER" id="PTHR42681">
    <property type="entry name" value="MALONYL-COA-ACYL CARRIER PROTEIN TRANSACYLASE, MITOCHONDRIAL"/>
    <property type="match status" value="1"/>
</dbReference>
<dbReference type="PANTHER" id="PTHR42681:SF1">
    <property type="entry name" value="MALONYL-COA-ACYL CARRIER PROTEIN TRANSACYLASE, MITOCHONDRIAL"/>
    <property type="match status" value="1"/>
</dbReference>
<dbReference type="SUPFAM" id="SSF52151">
    <property type="entry name" value="FabD/lysophospholipase-like"/>
    <property type="match status" value="1"/>
</dbReference>